<organism>
    <name type="scientific">Vitis vinifera</name>
    <name type="common">Grape</name>
    <dbReference type="NCBI Taxonomy" id="29760"/>
    <lineage>
        <taxon>Eukaryota</taxon>
        <taxon>Viridiplantae</taxon>
        <taxon>Streptophyta</taxon>
        <taxon>Embryophyta</taxon>
        <taxon>Tracheophyta</taxon>
        <taxon>Spermatophyta</taxon>
        <taxon>Magnoliopsida</taxon>
        <taxon>eudicotyledons</taxon>
        <taxon>Gunneridae</taxon>
        <taxon>Pentapetalae</taxon>
        <taxon>rosids</taxon>
        <taxon>Vitales</taxon>
        <taxon>Vitaceae</taxon>
        <taxon>Viteae</taxon>
        <taxon>Vitis</taxon>
    </lineage>
</organism>
<sequence>MSKVYDWFEERLEIQAIADDITSKYVPPHVNIFYCLGGITLTCFLVQVATGFAMTFYYRPTVTEAFASVQYIMTEANFGWLIRSVHRWSASMMVLMMILHVFRVYLTGGFKKPRELTWVTGVVLGVLTASFGVTGYSLPRDQIGYWAVKIVTGVPEAIPVIGSPLVELLRGSASVGQSTLTRFYSLHTFVLPLLTAVFMLMHFPMIRKQGISGPL</sequence>
<reference key="1">
    <citation type="journal article" date="2006" name="BMC Evol. Biol.">
        <title>Phylogenetic analyses of Vitis (Vitaceae) based on complete chloroplast genome sequences: effects of taxon sampling and phylogenetic methods on resolving relationships among rosids.</title>
        <authorList>
            <person name="Jansen R.K."/>
            <person name="Kaittanis C."/>
            <person name="Lee S.-B."/>
            <person name="Saski C."/>
            <person name="Tomkins J."/>
            <person name="Alverson A.J."/>
            <person name="Daniell H."/>
        </authorList>
    </citation>
    <scope>NUCLEOTIDE SEQUENCE [LARGE SCALE GENOMIC DNA]</scope>
    <source>
        <strain>cv. Maxxa</strain>
    </source>
</reference>
<protein>
    <recommendedName>
        <fullName evidence="1">Cytochrome b6</fullName>
    </recommendedName>
</protein>
<evidence type="ECO:0000255" key="1">
    <source>
        <dbReference type="HAMAP-Rule" id="MF_00633"/>
    </source>
</evidence>
<keyword id="KW-0150">Chloroplast</keyword>
<keyword id="KW-0249">Electron transport</keyword>
<keyword id="KW-0349">Heme</keyword>
<keyword id="KW-0408">Iron</keyword>
<keyword id="KW-0472">Membrane</keyword>
<keyword id="KW-0479">Metal-binding</keyword>
<keyword id="KW-0602">Photosynthesis</keyword>
<keyword id="KW-0934">Plastid</keyword>
<keyword id="KW-1185">Reference proteome</keyword>
<keyword id="KW-0793">Thylakoid</keyword>
<keyword id="KW-0812">Transmembrane</keyword>
<keyword id="KW-1133">Transmembrane helix</keyword>
<keyword id="KW-0813">Transport</keyword>
<comment type="function">
    <text evidence="1">Component of the cytochrome b6-f complex, which mediates electron transfer between photosystem II (PSII) and photosystem I (PSI), cyclic electron flow around PSI, and state transitions.</text>
</comment>
<comment type="cofactor">
    <cofactor evidence="1">
        <name>heme b</name>
        <dbReference type="ChEBI" id="CHEBI:60344"/>
    </cofactor>
    <text evidence="1">Binds 2 heme b groups non-covalently with two histidine residues as axial ligands.</text>
</comment>
<comment type="cofactor">
    <cofactor evidence="1">
        <name>heme c</name>
        <dbReference type="ChEBI" id="CHEBI:61717"/>
    </cofactor>
    <text evidence="1">Binds one heme group covalently by a single cysteine link with no axial amino acid ligand. This heme was named heme ci.</text>
</comment>
<comment type="subunit">
    <text evidence="1">The 4 large subunits of the cytochrome b6-f complex are cytochrome b6, subunit IV (17 kDa polypeptide, PetD), cytochrome f and the Rieske protein, while the 4 small subunits are PetG, PetL, PetM and PetN. The complex functions as a dimer.</text>
</comment>
<comment type="subcellular location">
    <subcellularLocation>
        <location evidence="1">Plastid</location>
        <location evidence="1">Chloroplast thylakoid membrane</location>
        <topology evidence="1">Multi-pass membrane protein</topology>
    </subcellularLocation>
</comment>
<comment type="miscellaneous">
    <text evidence="1">Heme 1 (or BH or b566) is high-potential and absorbs at about 566 nm, and heme 2 (or BL or b562) is low-potential and absorbs at about 562 nm.</text>
</comment>
<comment type="similarity">
    <text evidence="1">Belongs to the cytochrome b family. PetB subfamily.</text>
</comment>
<gene>
    <name evidence="1" type="primary">petB</name>
</gene>
<feature type="chain" id="PRO_0000275340" description="Cytochrome b6">
    <location>
        <begin position="1"/>
        <end position="215"/>
    </location>
</feature>
<feature type="transmembrane region" description="Helical" evidence="1">
    <location>
        <begin position="32"/>
        <end position="52"/>
    </location>
</feature>
<feature type="transmembrane region" description="Helical" evidence="1">
    <location>
        <begin position="90"/>
        <end position="110"/>
    </location>
</feature>
<feature type="transmembrane region" description="Helical" evidence="1">
    <location>
        <begin position="116"/>
        <end position="136"/>
    </location>
</feature>
<feature type="transmembrane region" description="Helical" evidence="1">
    <location>
        <begin position="186"/>
        <end position="206"/>
    </location>
</feature>
<feature type="binding site" description="covalent" evidence="1">
    <location>
        <position position="35"/>
    </location>
    <ligand>
        <name>heme c</name>
        <dbReference type="ChEBI" id="CHEBI:61717"/>
    </ligand>
</feature>
<feature type="binding site" description="axial binding residue" evidence="1">
    <location>
        <position position="86"/>
    </location>
    <ligand>
        <name>heme b</name>
        <dbReference type="ChEBI" id="CHEBI:60344"/>
        <label>2</label>
    </ligand>
    <ligandPart>
        <name>Fe</name>
        <dbReference type="ChEBI" id="CHEBI:18248"/>
    </ligandPart>
</feature>
<feature type="binding site" description="axial binding residue" evidence="1">
    <location>
        <position position="100"/>
    </location>
    <ligand>
        <name>heme b</name>
        <dbReference type="ChEBI" id="CHEBI:60344"/>
        <label>1</label>
    </ligand>
    <ligandPart>
        <name>Fe</name>
        <dbReference type="ChEBI" id="CHEBI:18248"/>
    </ligandPart>
</feature>
<feature type="binding site" description="axial binding residue" evidence="1">
    <location>
        <position position="187"/>
    </location>
    <ligand>
        <name>heme b</name>
        <dbReference type="ChEBI" id="CHEBI:60344"/>
        <label>2</label>
    </ligand>
    <ligandPart>
        <name>Fe</name>
        <dbReference type="ChEBI" id="CHEBI:18248"/>
    </ligandPart>
</feature>
<feature type="binding site" description="axial binding residue" evidence="1">
    <location>
        <position position="202"/>
    </location>
    <ligand>
        <name>heme b</name>
        <dbReference type="ChEBI" id="CHEBI:60344"/>
        <label>1</label>
    </ligand>
    <ligandPart>
        <name>Fe</name>
        <dbReference type="ChEBI" id="CHEBI:18248"/>
    </ligandPart>
</feature>
<geneLocation type="chloroplast"/>
<proteinExistence type="inferred from homology"/>
<dbReference type="EMBL" id="DQ424856">
    <property type="protein sequence ID" value="ABE47563.1"/>
    <property type="molecule type" value="Genomic_DNA"/>
</dbReference>
<dbReference type="RefSeq" id="YP_567107.1">
    <property type="nucleotide sequence ID" value="NC_007957.1"/>
</dbReference>
<dbReference type="SMR" id="Q0ZIY9"/>
<dbReference type="FunCoup" id="Q0ZIY9">
    <property type="interactions" value="321"/>
</dbReference>
<dbReference type="STRING" id="29760.Q0ZIY9"/>
<dbReference type="GeneID" id="4025129"/>
<dbReference type="KEGG" id="vvi:4025129"/>
<dbReference type="InParanoid" id="Q0ZIY9"/>
<dbReference type="OrthoDB" id="1663482at2759"/>
<dbReference type="Proteomes" id="UP000009183">
    <property type="component" value="Chloroplast"/>
</dbReference>
<dbReference type="GO" id="GO:0009535">
    <property type="term" value="C:chloroplast thylakoid membrane"/>
    <property type="evidence" value="ECO:0007669"/>
    <property type="project" value="UniProtKB-SubCell"/>
</dbReference>
<dbReference type="GO" id="GO:0016020">
    <property type="term" value="C:membrane"/>
    <property type="evidence" value="ECO:0000318"/>
    <property type="project" value="GO_Central"/>
</dbReference>
<dbReference type="GO" id="GO:0045158">
    <property type="term" value="F:electron transporter, transferring electrons within cytochrome b6/f complex of photosystem II activity"/>
    <property type="evidence" value="ECO:0007669"/>
    <property type="project" value="UniProtKB-UniRule"/>
</dbReference>
<dbReference type="GO" id="GO:0046872">
    <property type="term" value="F:metal ion binding"/>
    <property type="evidence" value="ECO:0007669"/>
    <property type="project" value="UniProtKB-KW"/>
</dbReference>
<dbReference type="GO" id="GO:0016491">
    <property type="term" value="F:oxidoreductase activity"/>
    <property type="evidence" value="ECO:0007669"/>
    <property type="project" value="InterPro"/>
</dbReference>
<dbReference type="GO" id="GO:0015979">
    <property type="term" value="P:photosynthesis"/>
    <property type="evidence" value="ECO:0007669"/>
    <property type="project" value="UniProtKB-UniRule"/>
</dbReference>
<dbReference type="GO" id="GO:0022904">
    <property type="term" value="P:respiratory electron transport chain"/>
    <property type="evidence" value="ECO:0007669"/>
    <property type="project" value="InterPro"/>
</dbReference>
<dbReference type="CDD" id="cd00284">
    <property type="entry name" value="Cytochrome_b_N"/>
    <property type="match status" value="1"/>
</dbReference>
<dbReference type="FunFam" id="1.20.810.10:FF:000001">
    <property type="entry name" value="Cytochrome b6"/>
    <property type="match status" value="1"/>
</dbReference>
<dbReference type="Gene3D" id="1.20.810.10">
    <property type="entry name" value="Cytochrome Bc1 Complex, Chain C"/>
    <property type="match status" value="1"/>
</dbReference>
<dbReference type="HAMAP" id="MF_00633">
    <property type="entry name" value="Cytb6_f_cytb6"/>
    <property type="match status" value="1"/>
</dbReference>
<dbReference type="InterPro" id="IPR005797">
    <property type="entry name" value="Cyt_b/b6_N"/>
</dbReference>
<dbReference type="InterPro" id="IPR023530">
    <property type="entry name" value="Cyt_B6_PetB"/>
</dbReference>
<dbReference type="InterPro" id="IPR027387">
    <property type="entry name" value="Cytb/b6-like_sf"/>
</dbReference>
<dbReference type="InterPro" id="IPR048259">
    <property type="entry name" value="Cytochrome_b_N_euk/bac"/>
</dbReference>
<dbReference type="InterPro" id="IPR016174">
    <property type="entry name" value="Di-haem_cyt_TM"/>
</dbReference>
<dbReference type="NCBIfam" id="NF002990">
    <property type="entry name" value="PRK03735.1"/>
    <property type="match status" value="1"/>
</dbReference>
<dbReference type="PANTHER" id="PTHR19271">
    <property type="entry name" value="CYTOCHROME B"/>
    <property type="match status" value="1"/>
</dbReference>
<dbReference type="PANTHER" id="PTHR19271:SF16">
    <property type="entry name" value="CYTOCHROME B"/>
    <property type="match status" value="1"/>
</dbReference>
<dbReference type="Pfam" id="PF00033">
    <property type="entry name" value="Cytochrome_B"/>
    <property type="match status" value="1"/>
</dbReference>
<dbReference type="PIRSF" id="PIRSF000032">
    <property type="entry name" value="Cytochrome_b6"/>
    <property type="match status" value="1"/>
</dbReference>
<dbReference type="SUPFAM" id="SSF81342">
    <property type="entry name" value="Transmembrane di-heme cytochromes"/>
    <property type="match status" value="1"/>
</dbReference>
<dbReference type="PROSITE" id="PS51002">
    <property type="entry name" value="CYTB_NTER"/>
    <property type="match status" value="1"/>
</dbReference>
<name>CYB6_VITVI</name>
<accession>Q0ZIY9</accession>